<protein>
    <recommendedName>
        <fullName>Clathrin interactor 1</fullName>
    </recommendedName>
    <alternativeName>
        <fullName>Clathrin-interacting protein localized in the trans-Golgi region</fullName>
        <shortName>Clint</shortName>
    </alternativeName>
    <alternativeName>
        <fullName>Enthoprotin</fullName>
    </alternativeName>
    <alternativeName>
        <fullName>Epsin-4</fullName>
    </alternativeName>
    <alternativeName>
        <fullName>Epsin-related protein</fullName>
        <shortName>EpsinR</shortName>
    </alternativeName>
</protein>
<proteinExistence type="evidence at protein level"/>
<evidence type="ECO:0000250" key="1"/>
<evidence type="ECO:0000250" key="2">
    <source>
        <dbReference type="UniProtKB" id="Q99KN9"/>
    </source>
</evidence>
<evidence type="ECO:0000255" key="3">
    <source>
        <dbReference type="PROSITE-ProRule" id="PRU00243"/>
    </source>
</evidence>
<evidence type="ECO:0000256" key="4">
    <source>
        <dbReference type="SAM" id="MobiDB-lite"/>
    </source>
</evidence>
<evidence type="ECO:0000269" key="5">
    <source>
    </source>
</evidence>
<evidence type="ECO:0000269" key="6">
    <source>
    </source>
</evidence>
<evidence type="ECO:0000269" key="7">
    <source>
    </source>
</evidence>
<evidence type="ECO:0000269" key="8">
    <source>
    </source>
</evidence>
<evidence type="ECO:0000269" key="9">
    <source>
    </source>
</evidence>
<evidence type="ECO:0000269" key="10">
    <source>
    </source>
</evidence>
<evidence type="ECO:0000303" key="11">
    <source>
    </source>
</evidence>
<evidence type="ECO:0000303" key="12">
    <source>
    </source>
</evidence>
<evidence type="ECO:0000305" key="13"/>
<evidence type="ECO:0007744" key="14">
    <source>
        <dbReference type="PDB" id="2V8S"/>
    </source>
</evidence>
<evidence type="ECO:0007744" key="15">
    <source>
    </source>
</evidence>
<evidence type="ECO:0007744" key="16">
    <source>
    </source>
</evidence>
<evidence type="ECO:0007744" key="17">
    <source>
    </source>
</evidence>
<evidence type="ECO:0007744" key="18">
    <source>
    </source>
</evidence>
<evidence type="ECO:0007744" key="19">
    <source>
    </source>
</evidence>
<evidence type="ECO:0007744" key="20">
    <source>
    </source>
</evidence>
<evidence type="ECO:0007744" key="21">
    <source>
    </source>
</evidence>
<evidence type="ECO:0007744" key="22">
    <source>
    </source>
</evidence>
<evidence type="ECO:0007744" key="23">
    <source>
    </source>
</evidence>
<evidence type="ECO:0007829" key="24">
    <source>
        <dbReference type="PDB" id="1XGW"/>
    </source>
</evidence>
<evidence type="ECO:0007829" key="25">
    <source>
        <dbReference type="PDB" id="2QY7"/>
    </source>
</evidence>
<feature type="chain" id="PRO_0000074521" description="Clathrin interactor 1">
    <location>
        <begin position="1"/>
        <end position="625"/>
    </location>
</feature>
<feature type="domain" description="ENTH" evidence="3">
    <location>
        <begin position="16"/>
        <end position="149"/>
    </location>
</feature>
<feature type="region of interest" description="Interaction with VTI1B" evidence="10 14">
    <location>
        <begin position="52"/>
        <end position="54"/>
    </location>
</feature>
<feature type="region of interest" description="Interaction with VTI1B" evidence="10 14">
    <location>
        <begin position="94"/>
        <end position="96"/>
    </location>
</feature>
<feature type="region of interest" description="Interaction with VTI1B" evidence="10 14">
    <location>
        <begin position="142"/>
        <end position="153"/>
    </location>
</feature>
<feature type="region of interest" description="Disordered" evidence="4">
    <location>
        <begin position="219"/>
        <end position="331"/>
    </location>
</feature>
<feature type="region of interest" description="Interaction with AP1G1, AP1G2 and GGA2" evidence="8">
    <location>
        <begin position="340"/>
        <end position="352"/>
    </location>
</feature>
<feature type="region of interest" description="Interaction with AP1G1 and AP1G2" evidence="8">
    <location>
        <begin position="368"/>
        <end position="380"/>
    </location>
</feature>
<feature type="compositionally biased region" description="Basic and acidic residues" evidence="4">
    <location>
        <begin position="222"/>
        <end position="239"/>
    </location>
</feature>
<feature type="compositionally biased region" description="Low complexity" evidence="4">
    <location>
        <begin position="308"/>
        <end position="323"/>
    </location>
</feature>
<feature type="binding site" evidence="1">
    <location>
        <position position="29"/>
    </location>
    <ligand>
        <name>a 1,2-diacyl-sn-glycero-3-phospho-(1D-myo-inositol-4,5-bisphosphate)</name>
        <dbReference type="ChEBI" id="CHEBI:58456"/>
    </ligand>
</feature>
<feature type="binding site" evidence="1">
    <location>
        <position position="67"/>
    </location>
    <ligand>
        <name>a 1,2-diacyl-sn-glycero-3-phospho-(1D-myo-inositol-4,5-bisphosphate)</name>
        <dbReference type="ChEBI" id="CHEBI:58456"/>
    </ligand>
</feature>
<feature type="modified residue" description="Phosphoserine" evidence="2">
    <location>
        <position position="163"/>
    </location>
</feature>
<feature type="modified residue" description="Phosphoserine" evidence="22">
    <location>
        <position position="166"/>
    </location>
</feature>
<feature type="modified residue" description="Phosphoserine" evidence="22">
    <location>
        <position position="173"/>
    </location>
</feature>
<feature type="modified residue" description="Phosphoserine" evidence="2">
    <location>
        <position position="205"/>
    </location>
</feature>
<feature type="modified residue" description="Phosphoserine" evidence="22">
    <location>
        <position position="210"/>
    </location>
</feature>
<feature type="modified residue" description="Phosphoserine" evidence="15 16 23">
    <location>
        <position position="227"/>
    </location>
</feature>
<feature type="modified residue" description="Phosphoserine" evidence="17 18 20 22">
    <location>
        <position position="245"/>
    </location>
</feature>
<feature type="modified residue" description="Phosphoserine" evidence="17 18 19 20 21 22 23">
    <location>
        <position position="299"/>
    </location>
</feature>
<feature type="modified residue" description="Phosphothreonine" evidence="22">
    <location>
        <position position="308"/>
    </location>
</feature>
<feature type="modified residue" description="Phosphoserine" evidence="22">
    <location>
        <position position="312"/>
    </location>
</feature>
<feature type="modified residue" description="Phosphoserine" evidence="22">
    <location>
        <position position="624"/>
    </location>
</feature>
<feature type="splice variant" id="VSP_009160" description="In isoform 2." evidence="11 12">
    <location>
        <begin position="1"/>
        <end position="18"/>
    </location>
</feature>
<feature type="splice variant" id="VSP_043302" description="In isoform 3." evidence="11">
    <original>S</original>
    <variation>SQPLQNVSTVLQKPNPLYN</variation>
    <location>
        <position position="459"/>
    </location>
</feature>
<feature type="splice variant" id="VSP_009161" description="In isoform 2." evidence="11 12">
    <original>Q</original>
    <variation>QPLQNVSTVLQKPNPLYNQ</variation>
    <location>
        <position position="460"/>
    </location>
</feature>
<feature type="mutagenesis site" description="Reduces lipid binding. Abolishes lipid binding; when associated with G-34." evidence="7">
    <original>R</original>
    <variation>L</variation>
    <location>
        <position position="29"/>
    </location>
</feature>
<feature type="mutagenesis site" description="Abolishes lipid binding; when associated with L-29." evidence="7">
    <original>D</original>
    <variation>G</variation>
    <location>
        <position position="34"/>
    </location>
</feature>
<feature type="mutagenesis site" description="Normal binding to VTI1B." evidence="10">
    <original>G</original>
    <variation>S</variation>
    <location>
        <position position="41"/>
    </location>
</feature>
<feature type="mutagenesis site" description="Normal binding to VTI1B." evidence="10">
    <original>E</original>
    <variation>W</variation>
    <location>
        <position position="46"/>
    </location>
</feature>
<feature type="mutagenesis site" description="Abolished binding to VTI1B." evidence="10">
    <original>F</original>
    <variation>D</variation>
    <location>
        <position position="52"/>
    </location>
</feature>
<feature type="mutagenesis site" description="Abolished binding to VTI1B." evidence="10">
    <original>MY</original>
    <variation>DD</variation>
    <location>
        <begin position="53"/>
        <end position="54"/>
    </location>
</feature>
<feature type="mutagenesis site" description="Normal binding to VTI1B." evidence="10">
    <original>E</original>
    <variation>W</variation>
    <location>
        <position position="95"/>
    </location>
</feature>
<feature type="mutagenesis site" description="Abolished binding to VTI1B." evidence="10">
    <original>R</original>
    <variation>S</variation>
    <location>
        <position position="96"/>
    </location>
</feature>
<feature type="mutagenesis site" description="Abolished binding to VTI1B. Rescued binding to VTI1B R-23 mutant." evidence="10">
    <original>R</original>
    <variation>E</variation>
    <location>
        <position position="146"/>
    </location>
</feature>
<feature type="mutagenesis site" description="Normal binding to VTI1B." evidence="10">
    <original>K</original>
    <variation>D</variation>
    <location>
        <position position="153"/>
    </location>
</feature>
<feature type="mutagenesis site" description="Normal binding to VTI1B." evidence="10">
    <original>Y</original>
    <variation>S</variation>
    <location>
        <position position="159"/>
    </location>
</feature>
<feature type="mutagenesis site" description="Decreases AP-1 and AP-2 binding." evidence="7">
    <original>D</original>
    <variation>R</variation>
    <location>
        <position position="349"/>
    </location>
</feature>
<feature type="mutagenesis site" description="Slightly decreases AP-1 binding." evidence="7">
    <original>D</original>
    <variation>R</variation>
    <location>
        <position position="371"/>
    </location>
</feature>
<feature type="mutagenesis site" description="Strongly decreases clathrin binding." evidence="7">
    <original>D</original>
    <variation>R</variation>
    <location>
        <position position="422"/>
    </location>
</feature>
<feature type="mutagenesis site" description="Strongly reduces clathrin binding." evidence="6">
    <original>LFDL</original>
    <variation>AFAA</variation>
    <location>
        <begin position="423"/>
        <end position="426"/>
    </location>
</feature>
<feature type="sequence conflict" description="In Ref. 4; BAC03971." evidence="13" ref="4">
    <original>T</original>
    <variation>A</variation>
    <location>
        <position position="476"/>
    </location>
</feature>
<feature type="helix" evidence="24">
    <location>
        <begin position="23"/>
        <end position="31"/>
    </location>
</feature>
<feature type="strand" evidence="25">
    <location>
        <begin position="33"/>
        <end position="37"/>
    </location>
</feature>
<feature type="helix" evidence="24">
    <location>
        <begin position="41"/>
        <end position="50"/>
    </location>
</feature>
<feature type="turn" evidence="24">
    <location>
        <begin position="54"/>
        <end position="56"/>
    </location>
</feature>
<feature type="helix" evidence="24">
    <location>
        <begin position="57"/>
        <end position="69"/>
    </location>
</feature>
<feature type="helix" evidence="24">
    <location>
        <begin position="76"/>
        <end position="92"/>
    </location>
</feature>
<feature type="helix" evidence="24">
    <location>
        <begin position="95"/>
        <end position="103"/>
    </location>
</feature>
<feature type="helix" evidence="24">
    <location>
        <begin position="105"/>
        <end position="109"/>
    </location>
</feature>
<feature type="helix" evidence="24">
    <location>
        <begin position="110"/>
        <end position="113"/>
    </location>
</feature>
<feature type="helix" evidence="24">
    <location>
        <begin position="125"/>
        <end position="139"/>
    </location>
</feature>
<feature type="helix" evidence="24">
    <location>
        <begin position="142"/>
        <end position="151"/>
    </location>
</feature>
<reference key="1">
    <citation type="journal article" date="2002" name="J. Cell Biol.">
        <title>Enthoprotin: a novel clathrin-associated protein identified through subcellular proteomics.</title>
        <authorList>
            <person name="Wasiak S."/>
            <person name="Legendre-Guillemin V."/>
            <person name="Puertollano R."/>
            <person name="Blondeau F."/>
            <person name="Girard M."/>
            <person name="de Heuvel E."/>
            <person name="Boismenu D."/>
            <person name="Bell A.W."/>
            <person name="Bonifacino J.S."/>
            <person name="McPherson P.S."/>
        </authorList>
    </citation>
    <scope>NUCLEOTIDE SEQUENCE [GENOMIC DNA]</scope>
    <scope>PROTEIN SEQUENCE OF 14-27; 30-49; 110-129; 134-146; 157-171; 201-218; 248-274 AND 284-297 (ISOFORM 1)</scope>
    <scope>IDENTIFICATION BY MASS SPECTROMETRY</scope>
    <scope>INTERACTION WITH CLATHRIN; AP1G1 AND GGA2</scope>
    <scope>SUBCELLULAR LOCATION</scope>
</reference>
<reference key="2">
    <citation type="submission" date="2001-10" db="EMBL/GenBank/DDBJ databases">
        <title>KIAA0171 as a new member (epsin 4) of the epsin family.</title>
        <authorList>
            <person name="Hong W."/>
        </authorList>
    </citation>
    <scope>NUCLEOTIDE SEQUENCE [MRNA] (ISOFORM 1)</scope>
</reference>
<reference key="3">
    <citation type="journal article" date="1996" name="DNA Res.">
        <title>Prediction of the coding sequences of unidentified human genes. V. The coding sequences of 40 new genes (KIAA0161-KIAA0200) deduced by analysis of cDNA clones from human cell line KG-1.</title>
        <authorList>
            <person name="Nagase T."/>
            <person name="Seki N."/>
            <person name="Ishikawa K."/>
            <person name="Tanaka A."/>
            <person name="Nomura N."/>
        </authorList>
    </citation>
    <scope>NUCLEOTIDE SEQUENCE [LARGE SCALE MRNA] (ISOFORM 1)</scope>
    <source>
        <tissue>Bone marrow</tissue>
    </source>
</reference>
<reference key="4">
    <citation type="journal article" date="2004" name="Nat. Genet.">
        <title>Complete sequencing and characterization of 21,243 full-length human cDNAs.</title>
        <authorList>
            <person name="Ota T."/>
            <person name="Suzuki Y."/>
            <person name="Nishikawa T."/>
            <person name="Otsuki T."/>
            <person name="Sugiyama T."/>
            <person name="Irie R."/>
            <person name="Wakamatsu A."/>
            <person name="Hayashi K."/>
            <person name="Sato H."/>
            <person name="Nagai K."/>
            <person name="Kimura K."/>
            <person name="Makita H."/>
            <person name="Sekine M."/>
            <person name="Obayashi M."/>
            <person name="Nishi T."/>
            <person name="Shibahara T."/>
            <person name="Tanaka T."/>
            <person name="Ishii S."/>
            <person name="Yamamoto J."/>
            <person name="Saito K."/>
            <person name="Kawai Y."/>
            <person name="Isono Y."/>
            <person name="Nakamura Y."/>
            <person name="Nagahari K."/>
            <person name="Murakami K."/>
            <person name="Yasuda T."/>
            <person name="Iwayanagi T."/>
            <person name="Wagatsuma M."/>
            <person name="Shiratori A."/>
            <person name="Sudo H."/>
            <person name="Hosoiri T."/>
            <person name="Kaku Y."/>
            <person name="Kodaira H."/>
            <person name="Kondo H."/>
            <person name="Sugawara M."/>
            <person name="Takahashi M."/>
            <person name="Kanda K."/>
            <person name="Yokoi T."/>
            <person name="Furuya T."/>
            <person name="Kikkawa E."/>
            <person name="Omura Y."/>
            <person name="Abe K."/>
            <person name="Kamihara K."/>
            <person name="Katsuta N."/>
            <person name="Sato K."/>
            <person name="Tanikawa M."/>
            <person name="Yamazaki M."/>
            <person name="Ninomiya K."/>
            <person name="Ishibashi T."/>
            <person name="Yamashita H."/>
            <person name="Murakawa K."/>
            <person name="Fujimori K."/>
            <person name="Tanai H."/>
            <person name="Kimata M."/>
            <person name="Watanabe M."/>
            <person name="Hiraoka S."/>
            <person name="Chiba Y."/>
            <person name="Ishida S."/>
            <person name="Ono Y."/>
            <person name="Takiguchi S."/>
            <person name="Watanabe S."/>
            <person name="Yosida M."/>
            <person name="Hotuta T."/>
            <person name="Kusano J."/>
            <person name="Kanehori K."/>
            <person name="Takahashi-Fujii A."/>
            <person name="Hara H."/>
            <person name="Tanase T.-O."/>
            <person name="Nomura Y."/>
            <person name="Togiya S."/>
            <person name="Komai F."/>
            <person name="Hara R."/>
            <person name="Takeuchi K."/>
            <person name="Arita M."/>
            <person name="Imose N."/>
            <person name="Musashino K."/>
            <person name="Yuuki H."/>
            <person name="Oshima A."/>
            <person name="Sasaki N."/>
            <person name="Aotsuka S."/>
            <person name="Yoshikawa Y."/>
            <person name="Matsunawa H."/>
            <person name="Ichihara T."/>
            <person name="Shiohata N."/>
            <person name="Sano S."/>
            <person name="Moriya S."/>
            <person name="Momiyama H."/>
            <person name="Satoh N."/>
            <person name="Takami S."/>
            <person name="Terashima Y."/>
            <person name="Suzuki O."/>
            <person name="Nakagawa S."/>
            <person name="Senoh A."/>
            <person name="Mizoguchi H."/>
            <person name="Goto Y."/>
            <person name="Shimizu F."/>
            <person name="Wakebe H."/>
            <person name="Hishigaki H."/>
            <person name="Watanabe T."/>
            <person name="Sugiyama A."/>
            <person name="Takemoto M."/>
            <person name="Kawakami B."/>
            <person name="Yamazaki M."/>
            <person name="Watanabe K."/>
            <person name="Kumagai A."/>
            <person name="Itakura S."/>
            <person name="Fukuzumi Y."/>
            <person name="Fujimori Y."/>
            <person name="Komiyama M."/>
            <person name="Tashiro H."/>
            <person name="Tanigami A."/>
            <person name="Fujiwara T."/>
            <person name="Ono T."/>
            <person name="Yamada K."/>
            <person name="Fujii Y."/>
            <person name="Ozaki K."/>
            <person name="Hirao M."/>
            <person name="Ohmori Y."/>
            <person name="Kawabata A."/>
            <person name="Hikiji T."/>
            <person name="Kobatake N."/>
            <person name="Inagaki H."/>
            <person name="Ikema Y."/>
            <person name="Okamoto S."/>
            <person name="Okitani R."/>
            <person name="Kawakami T."/>
            <person name="Noguchi S."/>
            <person name="Itoh T."/>
            <person name="Shigeta K."/>
            <person name="Senba T."/>
            <person name="Matsumura K."/>
            <person name="Nakajima Y."/>
            <person name="Mizuno T."/>
            <person name="Morinaga M."/>
            <person name="Sasaki M."/>
            <person name="Togashi T."/>
            <person name="Oyama M."/>
            <person name="Hata H."/>
            <person name="Watanabe M."/>
            <person name="Komatsu T."/>
            <person name="Mizushima-Sugano J."/>
            <person name="Satoh T."/>
            <person name="Shirai Y."/>
            <person name="Takahashi Y."/>
            <person name="Nakagawa K."/>
            <person name="Okumura K."/>
            <person name="Nagase T."/>
            <person name="Nomura N."/>
            <person name="Kikuchi H."/>
            <person name="Masuho Y."/>
            <person name="Yamashita R."/>
            <person name="Nakai K."/>
            <person name="Yada T."/>
            <person name="Nakamura Y."/>
            <person name="Ohara O."/>
            <person name="Isogai T."/>
            <person name="Sugano S."/>
        </authorList>
    </citation>
    <scope>NUCLEOTIDE SEQUENCE [LARGE SCALE MRNA] (ISOFORMS 2 AND 3)</scope>
    <source>
        <tissue>Placenta</tissue>
        <tissue>Small intestine</tissue>
    </source>
</reference>
<reference key="5">
    <citation type="journal article" date="2004" name="Nature">
        <title>The DNA sequence and comparative analysis of human chromosome 5.</title>
        <authorList>
            <person name="Schmutz J."/>
            <person name="Martin J."/>
            <person name="Terry A."/>
            <person name="Couronne O."/>
            <person name="Grimwood J."/>
            <person name="Lowry S."/>
            <person name="Gordon L.A."/>
            <person name="Scott D."/>
            <person name="Xie G."/>
            <person name="Huang W."/>
            <person name="Hellsten U."/>
            <person name="Tran-Gyamfi M."/>
            <person name="She X."/>
            <person name="Prabhakar S."/>
            <person name="Aerts A."/>
            <person name="Altherr M."/>
            <person name="Bajorek E."/>
            <person name="Black S."/>
            <person name="Branscomb E."/>
            <person name="Caoile C."/>
            <person name="Challacombe J.F."/>
            <person name="Chan Y.M."/>
            <person name="Denys M."/>
            <person name="Detter J.C."/>
            <person name="Escobar J."/>
            <person name="Flowers D."/>
            <person name="Fotopulos D."/>
            <person name="Glavina T."/>
            <person name="Gomez M."/>
            <person name="Gonzales E."/>
            <person name="Goodstein D."/>
            <person name="Grigoriev I."/>
            <person name="Groza M."/>
            <person name="Hammon N."/>
            <person name="Hawkins T."/>
            <person name="Haydu L."/>
            <person name="Israni S."/>
            <person name="Jett J."/>
            <person name="Kadner K."/>
            <person name="Kimball H."/>
            <person name="Kobayashi A."/>
            <person name="Lopez F."/>
            <person name="Lou Y."/>
            <person name="Martinez D."/>
            <person name="Medina C."/>
            <person name="Morgan J."/>
            <person name="Nandkeshwar R."/>
            <person name="Noonan J.P."/>
            <person name="Pitluck S."/>
            <person name="Pollard M."/>
            <person name="Predki P."/>
            <person name="Priest J."/>
            <person name="Ramirez L."/>
            <person name="Retterer J."/>
            <person name="Rodriguez A."/>
            <person name="Rogers S."/>
            <person name="Salamov A."/>
            <person name="Salazar A."/>
            <person name="Thayer N."/>
            <person name="Tice H."/>
            <person name="Tsai M."/>
            <person name="Ustaszewska A."/>
            <person name="Vo N."/>
            <person name="Wheeler J."/>
            <person name="Wu K."/>
            <person name="Yang J."/>
            <person name="Dickson M."/>
            <person name="Cheng J.-F."/>
            <person name="Eichler E.E."/>
            <person name="Olsen A."/>
            <person name="Pennacchio L.A."/>
            <person name="Rokhsar D.S."/>
            <person name="Richardson P."/>
            <person name="Lucas S.M."/>
            <person name="Myers R.M."/>
            <person name="Rubin E.M."/>
        </authorList>
    </citation>
    <scope>NUCLEOTIDE SEQUENCE [LARGE SCALE GENOMIC DNA]</scope>
</reference>
<reference key="6">
    <citation type="submission" date="2005-09" db="EMBL/GenBank/DDBJ databases">
        <authorList>
            <person name="Mural R.J."/>
            <person name="Istrail S."/>
            <person name="Sutton G.G."/>
            <person name="Florea L."/>
            <person name="Halpern A.L."/>
            <person name="Mobarry C.M."/>
            <person name="Lippert R."/>
            <person name="Walenz B."/>
            <person name="Shatkay H."/>
            <person name="Dew I."/>
            <person name="Miller J.R."/>
            <person name="Flanigan M.J."/>
            <person name="Edwards N.J."/>
            <person name="Bolanos R."/>
            <person name="Fasulo D."/>
            <person name="Halldorsson B.V."/>
            <person name="Hannenhalli S."/>
            <person name="Turner R."/>
            <person name="Yooseph S."/>
            <person name="Lu F."/>
            <person name="Nusskern D.R."/>
            <person name="Shue B.C."/>
            <person name="Zheng X.H."/>
            <person name="Zhong F."/>
            <person name="Delcher A.L."/>
            <person name="Huson D.H."/>
            <person name="Kravitz S.A."/>
            <person name="Mouchard L."/>
            <person name="Reinert K."/>
            <person name="Remington K.A."/>
            <person name="Clark A.G."/>
            <person name="Waterman M.S."/>
            <person name="Eichler E.E."/>
            <person name="Adams M.D."/>
            <person name="Hunkapiller M.W."/>
            <person name="Myers E.W."/>
            <person name="Venter J.C."/>
        </authorList>
    </citation>
    <scope>NUCLEOTIDE SEQUENCE [LARGE SCALE GENOMIC DNA]</scope>
</reference>
<reference key="7">
    <citation type="journal article" date="2004" name="Genome Res.">
        <title>The status, quality, and expansion of the NIH full-length cDNA project: the Mammalian Gene Collection (MGC).</title>
        <authorList>
            <consortium name="The MGC Project Team"/>
        </authorList>
    </citation>
    <scope>NUCLEOTIDE SEQUENCE [LARGE SCALE MRNA] (ISOFORMS 1 AND 2)</scope>
    <source>
        <tissue>Lung</tissue>
        <tissue>Skin</tissue>
    </source>
</reference>
<reference key="8">
    <citation type="journal article" date="2002" name="Mol. Biol. Cell">
        <title>Clint: a novel clathrin-binding ENTH-domain protein at the Golgi.</title>
        <authorList>
            <person name="Kalthoff C."/>
            <person name="Groos S."/>
            <person name="Kohl R."/>
            <person name="Mahrhold S."/>
            <person name="Ungewickell E.J."/>
        </authorList>
    </citation>
    <scope>FUNCTION</scope>
    <scope>MUTAGENESIS OF 423-LEU--LEU-426</scope>
    <scope>INTERACTION WITH CLATHRIN; AP1G1 AND AP-2</scope>
    <scope>TISSUE SPECIFICITY</scope>
    <scope>SUBCELLULAR LOCATION</scope>
</reference>
<reference key="9">
    <citation type="journal article" date="2003" name="J. Cell Biol.">
        <title>EpsinR: an AP1/clathrin interacting protein involved in vesicle trafficking.</title>
        <authorList>
            <person name="Mills I.G."/>
            <person name="Praefcke G.J.K."/>
            <person name="Vallis Y."/>
            <person name="Peter B.J."/>
            <person name="Olesen L.E."/>
            <person name="Gallop J.L."/>
            <person name="Butler P.J.G."/>
            <person name="Evans P.R."/>
            <person name="McMahon H.T."/>
        </authorList>
    </citation>
    <scope>FUNCTION</scope>
    <scope>TISSUE SPECIFICITY</scope>
    <scope>SUBCELLULAR LOCATION</scope>
    <scope>MUTAGENESIS OF ARG-29; ASP-34; ASP-349; ASP-371 AND ASP-422</scope>
    <scope>INTERACTION WITH AP1G1; AP-2 AND CLATHRIN</scope>
</reference>
<reference key="10">
    <citation type="journal article" date="2004" name="J. Biol. Chem.">
        <title>Definition of the consensus motif recognized by gamma-adaptin ear domains.</title>
        <authorList>
            <person name="Mattera R."/>
            <person name="Ritter B."/>
            <person name="Sidhu S.S."/>
            <person name="McPherson P.S."/>
            <person name="Bonifacino J.S."/>
        </authorList>
    </citation>
    <scope>INTERACTION WITH AP1G1; AP1G2 AND GGA2</scope>
</reference>
<reference key="11">
    <citation type="journal article" date="2005" name="Am. J. Hum. Genet.">
        <title>The Epsin 4 gene on chromosome 5q, which encodes the clathrin-associated protein enthoprotin, is involved in the genetic susceptibility to schizophrenia.</title>
        <authorList>
            <person name="Pimm J."/>
            <person name="McQuillin A."/>
            <person name="Thirumalai S."/>
            <person name="Lawrence J."/>
            <person name="Quested D."/>
            <person name="Bass N."/>
            <person name="Lamb G."/>
            <person name="Moorey H."/>
            <person name="Datta S.R."/>
            <person name="Kalsi G."/>
            <person name="Badacsonyi A."/>
            <person name="Kelly K."/>
            <person name="Morgan J."/>
            <person name="Punukollu B."/>
            <person name="Curtis D."/>
            <person name="Gurling H."/>
        </authorList>
    </citation>
    <scope>POSSIBLE SUSCEPTIBILITY TO SCHIZOPHRENIA</scope>
</reference>
<reference key="12">
    <citation type="journal article" date="2006" name="Cell">
        <title>Global, in vivo, and site-specific phosphorylation dynamics in signaling networks.</title>
        <authorList>
            <person name="Olsen J.V."/>
            <person name="Blagoev B."/>
            <person name="Gnad F."/>
            <person name="Macek B."/>
            <person name="Kumar C."/>
            <person name="Mortensen P."/>
            <person name="Mann M."/>
        </authorList>
    </citation>
    <scope>PHOSPHORYLATION [LARGE SCALE ANALYSIS] AT SER-227</scope>
    <scope>IDENTIFICATION BY MASS SPECTROMETRY [LARGE SCALE ANALYSIS]</scope>
    <source>
        <tissue>Cervix carcinoma</tissue>
    </source>
</reference>
<reference key="13">
    <citation type="journal article" date="2008" name="Mol. Cell">
        <title>Kinase-selective enrichment enables quantitative phosphoproteomics of the kinome across the cell cycle.</title>
        <authorList>
            <person name="Daub H."/>
            <person name="Olsen J.V."/>
            <person name="Bairlein M."/>
            <person name="Gnad F."/>
            <person name="Oppermann F.S."/>
            <person name="Korner R."/>
            <person name="Greff Z."/>
            <person name="Keri G."/>
            <person name="Stemmann O."/>
            <person name="Mann M."/>
        </authorList>
    </citation>
    <scope>PHOSPHORYLATION [LARGE SCALE ANALYSIS] AT SER-245 AND SER-299</scope>
    <scope>IDENTIFICATION BY MASS SPECTROMETRY [LARGE SCALE ANALYSIS]</scope>
    <source>
        <tissue>Cervix carcinoma</tissue>
    </source>
</reference>
<reference key="14">
    <citation type="journal article" date="2008" name="Proc. Natl. Acad. Sci. U.S.A.">
        <title>A quantitative atlas of mitotic phosphorylation.</title>
        <authorList>
            <person name="Dephoure N."/>
            <person name="Zhou C."/>
            <person name="Villen J."/>
            <person name="Beausoleil S.A."/>
            <person name="Bakalarski C.E."/>
            <person name="Elledge S.J."/>
            <person name="Gygi S.P."/>
        </authorList>
    </citation>
    <scope>PHOSPHORYLATION [LARGE SCALE ANALYSIS] AT SER-245 AND SER-299</scope>
    <scope>IDENTIFICATION BY MASS SPECTROMETRY [LARGE SCALE ANALYSIS]</scope>
    <source>
        <tissue>Cervix carcinoma</tissue>
    </source>
</reference>
<reference key="15">
    <citation type="journal article" date="2008" name="Proteomics">
        <title>Large-scale phosphoproteome analysis of human liver tissue by enrichment and fractionation of phosphopeptides with strong anion exchange chromatography.</title>
        <authorList>
            <person name="Han G."/>
            <person name="Ye M."/>
            <person name="Zhou H."/>
            <person name="Jiang X."/>
            <person name="Feng S."/>
            <person name="Jiang X."/>
            <person name="Tian R."/>
            <person name="Wan D."/>
            <person name="Zou H."/>
            <person name="Gu J."/>
        </authorList>
    </citation>
    <scope>PHOSPHORYLATION [LARGE SCALE ANALYSIS] AT SER-227</scope>
    <scope>IDENTIFICATION BY MASS SPECTROMETRY [LARGE SCALE ANALYSIS]</scope>
    <source>
        <tissue>Liver</tissue>
    </source>
</reference>
<reference key="16">
    <citation type="journal article" date="2009" name="Anal. Chem.">
        <title>Lys-N and trypsin cover complementary parts of the phosphoproteome in a refined SCX-based approach.</title>
        <authorList>
            <person name="Gauci S."/>
            <person name="Helbig A.O."/>
            <person name="Slijper M."/>
            <person name="Krijgsveld J."/>
            <person name="Heck A.J."/>
            <person name="Mohammed S."/>
        </authorList>
    </citation>
    <scope>IDENTIFICATION BY MASS SPECTROMETRY [LARGE SCALE ANALYSIS]</scope>
</reference>
<reference key="17">
    <citation type="journal article" date="2009" name="Sci. Signal.">
        <title>Quantitative phosphoproteomic analysis of T cell receptor signaling reveals system-wide modulation of protein-protein interactions.</title>
        <authorList>
            <person name="Mayya V."/>
            <person name="Lundgren D.H."/>
            <person name="Hwang S.-I."/>
            <person name="Rezaul K."/>
            <person name="Wu L."/>
            <person name="Eng J.K."/>
            <person name="Rodionov V."/>
            <person name="Han D.K."/>
        </authorList>
    </citation>
    <scope>PHOSPHORYLATION [LARGE SCALE ANALYSIS] AT SER-299</scope>
    <scope>IDENTIFICATION BY MASS SPECTROMETRY [LARGE SCALE ANALYSIS]</scope>
    <source>
        <tissue>Leukemic T-cell</tissue>
    </source>
</reference>
<reference key="18">
    <citation type="journal article" date="2010" name="Sci. Signal.">
        <title>Quantitative phosphoproteomics reveals widespread full phosphorylation site occupancy during mitosis.</title>
        <authorList>
            <person name="Olsen J.V."/>
            <person name="Vermeulen M."/>
            <person name="Santamaria A."/>
            <person name="Kumar C."/>
            <person name="Miller M.L."/>
            <person name="Jensen L.J."/>
            <person name="Gnad F."/>
            <person name="Cox J."/>
            <person name="Jensen T.S."/>
            <person name="Nigg E.A."/>
            <person name="Brunak S."/>
            <person name="Mann M."/>
        </authorList>
    </citation>
    <scope>PHOSPHORYLATION [LARGE SCALE ANALYSIS] AT SER-245 AND SER-299</scope>
    <scope>IDENTIFICATION BY MASS SPECTROMETRY [LARGE SCALE ANALYSIS]</scope>
    <source>
        <tissue>Cervix carcinoma</tissue>
    </source>
</reference>
<reference key="19">
    <citation type="journal article" date="2011" name="BMC Syst. Biol.">
        <title>Initial characterization of the human central proteome.</title>
        <authorList>
            <person name="Burkard T.R."/>
            <person name="Planyavsky M."/>
            <person name="Kaupe I."/>
            <person name="Breitwieser F.P."/>
            <person name="Buerckstuemmer T."/>
            <person name="Bennett K.L."/>
            <person name="Superti-Furga G."/>
            <person name="Colinge J."/>
        </authorList>
    </citation>
    <scope>IDENTIFICATION BY MASS SPECTROMETRY [LARGE SCALE ANALYSIS]</scope>
</reference>
<reference key="20">
    <citation type="journal article" date="2011" name="Sci. Signal.">
        <title>System-wide temporal characterization of the proteome and phosphoproteome of human embryonic stem cell differentiation.</title>
        <authorList>
            <person name="Rigbolt K.T."/>
            <person name="Prokhorova T.A."/>
            <person name="Akimov V."/>
            <person name="Henningsen J."/>
            <person name="Johansen P.T."/>
            <person name="Kratchmarova I."/>
            <person name="Kassem M."/>
            <person name="Mann M."/>
            <person name="Olsen J.V."/>
            <person name="Blagoev B."/>
        </authorList>
    </citation>
    <scope>PHOSPHORYLATION [LARGE SCALE ANALYSIS] AT SER-299</scope>
    <scope>IDENTIFICATION BY MASS SPECTROMETRY [LARGE SCALE ANALYSIS]</scope>
</reference>
<reference key="21">
    <citation type="journal article" date="2013" name="J. Proteome Res.">
        <title>Toward a comprehensive characterization of a human cancer cell phosphoproteome.</title>
        <authorList>
            <person name="Zhou H."/>
            <person name="Di Palma S."/>
            <person name="Preisinger C."/>
            <person name="Peng M."/>
            <person name="Polat A.N."/>
            <person name="Heck A.J."/>
            <person name="Mohammed S."/>
        </authorList>
    </citation>
    <scope>PHOSPHORYLATION [LARGE SCALE ANALYSIS] AT SER-166; SER-173; SER-210; SER-245; SER-299; THR-308; SER-312 AND SER-624</scope>
    <scope>IDENTIFICATION BY MASS SPECTROMETRY [LARGE SCALE ANALYSIS]</scope>
    <source>
        <tissue>Cervix carcinoma</tissue>
        <tissue>Erythroleukemia</tissue>
    </source>
</reference>
<reference key="22">
    <citation type="journal article" date="2014" name="J. Proteomics">
        <title>An enzyme assisted RP-RPLC approach for in-depth analysis of human liver phosphoproteome.</title>
        <authorList>
            <person name="Bian Y."/>
            <person name="Song C."/>
            <person name="Cheng K."/>
            <person name="Dong M."/>
            <person name="Wang F."/>
            <person name="Huang J."/>
            <person name="Sun D."/>
            <person name="Wang L."/>
            <person name="Ye M."/>
            <person name="Zou H."/>
        </authorList>
    </citation>
    <scope>PHOSPHORYLATION [LARGE SCALE ANALYSIS] AT SER-227 AND SER-299</scope>
    <scope>IDENTIFICATION BY MASS SPECTROMETRY [LARGE SCALE ANALYSIS]</scope>
    <source>
        <tissue>Liver</tissue>
    </source>
</reference>
<reference key="23">
    <citation type="journal article" date="2015" name="Proteomics">
        <title>N-terminome analysis of the human mitochondrial proteome.</title>
        <authorList>
            <person name="Vaca Jacome A.S."/>
            <person name="Rabilloud T."/>
            <person name="Schaeffer-Reiss C."/>
            <person name="Rompais M."/>
            <person name="Ayoub D."/>
            <person name="Lane L."/>
            <person name="Bairoch A."/>
            <person name="Van Dorsselaer A."/>
            <person name="Carapito C."/>
        </authorList>
    </citation>
    <scope>IDENTIFICATION BY MASS SPECTROMETRY [LARGE SCALE ANALYSIS]</scope>
</reference>
<reference key="24">
    <citation type="submission" date="2004-09" db="PDB data bank">
        <title>The crystal structure of human enthoprotin N-terminal domain.</title>
        <authorList>
            <person name="Lunin V.V."/>
            <person name="Munger C."/>
            <person name="Mazzoni I."/>
            <person name="Wagner J."/>
            <person name="Cygler M."/>
        </authorList>
    </citation>
    <scope>X-RAY CRYSTALLOGRAPHY (1.90 ANGSTROMS) OF 1-165</scope>
</reference>
<reference key="25">
    <citation type="journal article" date="2007" name="Nature">
        <title>A SNARE-adaptor interaction is a new mode of cargo recognition in clathrin-coated vesicles.</title>
        <authorList>
            <person name="Miller S.E."/>
            <person name="Collins B.M."/>
            <person name="McCoy A.J."/>
            <person name="Robinson M.S."/>
            <person name="Owen D.J."/>
        </authorList>
    </citation>
    <scope>X-RAY CRYSTALLOGRAPHY (2.00 ANGSTROMS) OF 20-166 IN COMPLEX WITH VTI1B</scope>
    <scope>SUBCELLULAR LOCATION</scope>
    <scope>MUTAGENESIS OF GLY-41; GLU-46; PHE-52; 53-MET-TYR-54; GLU-95; ARG-96; ARG-146; LYS-153 AND TYR-159</scope>
</reference>
<comment type="function">
    <text evidence="6 7">Binds to membranes enriched in phosphatidylinositol 4,5-bisphosphate (PtdIns(4,5)P2). May have a role in transport via clathrin-coated vesicles from the trans-Golgi network to endosomes. Stimulates clathrin assembly.</text>
</comment>
<comment type="subunit">
    <text evidence="5 6 7 8 10">Binds clathrin heavy chain and AP-2 (PubMed:12213833, PubMed:12429846, PubMed:12538641). Interacts with VTI1B (PubMed:18033301). Interacts with GGA2 (via GAE domain) (PubMed:12213833, PubMed:14665628). Interacts with AP1G1 (via GAE domain) (PubMed:12213833, PubMed:12429846, PubMed:12538641, PubMed:14665628). Interacts with AP1G2 (via GAE domain) (PubMed:14665628).</text>
</comment>
<comment type="interaction">
    <interactant intactId="EBI-1171113">
        <id>Q14677</id>
    </interactant>
    <interactant intactId="EBI-1383367">
        <id>Q9NSY1</id>
        <label>BMP2K</label>
    </interactant>
    <organismsDiffer>false</organismsDiffer>
    <experiments>7</experiments>
</comment>
<comment type="interaction">
    <interactant intactId="EBI-1171113">
        <id>Q14677</id>
    </interactant>
    <interactant intactId="EBI-746969">
        <id>Q9H0R8</id>
        <label>GABARAPL1</label>
    </interactant>
    <organismsDiffer>false</organismsDiffer>
    <experiments>2</experiments>
</comment>
<comment type="interaction">
    <interactant intactId="EBI-1171113">
        <id>Q14677</id>
    </interactant>
    <interactant intactId="EBI-16430931">
        <id>Q8WTR4-3</id>
        <label>GDPD5</label>
    </interactant>
    <organismsDiffer>false</organismsDiffer>
    <experiments>3</experiments>
</comment>
<comment type="interaction">
    <interactant intactId="EBI-1171113">
        <id>Q14677</id>
    </interactant>
    <interactant intactId="EBI-10975473">
        <id>O60333-2</id>
        <label>KIF1B</label>
    </interactant>
    <organismsDiffer>false</organismsDiffer>
    <experiments>3</experiments>
</comment>
<comment type="interaction">
    <interactant intactId="EBI-1171113">
        <id>Q14677</id>
    </interactant>
    <interactant intactId="EBI-373144">
        <id>Q9GZQ8</id>
        <label>MAP1LC3B</label>
    </interactant>
    <organismsDiffer>false</organismsDiffer>
    <experiments>2</experiments>
</comment>
<comment type="interaction">
    <interactant intactId="EBI-1171113">
        <id>Q14677</id>
    </interactant>
    <interactant intactId="EBI-720609">
        <id>O76024</id>
        <label>WFS1</label>
    </interactant>
    <organismsDiffer>false</organismsDiffer>
    <experiments>3</experiments>
</comment>
<comment type="interaction">
    <interactant intactId="EBI-1171113">
        <id>Q14677</id>
    </interactant>
    <interactant intactId="EBI-1040262">
        <id>P22892</id>
        <label>Ap1g1</label>
    </interactant>
    <organismsDiffer>true</organismsDiffer>
    <experiments>10</experiments>
</comment>
<comment type="interaction">
    <interactant intactId="EBI-1171113">
        <id>Q14677</id>
    </interactant>
    <interactant intactId="EBI-775853">
        <id>O88384</id>
        <label>Vti1b</label>
    </interactant>
    <organismsDiffer>true</organismsDiffer>
    <experiments>6</experiments>
</comment>
<comment type="interaction">
    <interactant intactId="EBI-1171113">
        <id>Q14677</id>
    </interactant>
    <interactant intactId="EBI-9118921">
        <id>PRO_0000037943</id>
        <dbReference type="UniProtKB" id="P29991"/>
    </interactant>
    <organismsDiffer>true</organismsDiffer>
    <experiments>2</experiments>
</comment>
<comment type="subcellular location">
    <subcellularLocation>
        <location>Cytoplasm</location>
    </subcellularLocation>
    <subcellularLocation>
        <location>Cytoplasm</location>
        <location>Perinuclear region</location>
    </subcellularLocation>
    <subcellularLocation>
        <location>Membrane</location>
        <topology>Peripheral membrane protein</topology>
    </subcellularLocation>
    <subcellularLocation>
        <location>Cytoplasmic vesicle</location>
        <location>Clathrin-coated vesicle</location>
    </subcellularLocation>
    <text>Found throughout the cell, with the exception of the cell surface. Concentrated in the perinuclear region and associated with clathrin-coated vesicles close to the trans-Golgi network.</text>
</comment>
<comment type="alternative products">
    <event type="alternative splicing"/>
    <isoform>
        <id>Q14677-1</id>
        <name>1</name>
        <sequence type="displayed"/>
    </isoform>
    <isoform>
        <id>Q14677-2</id>
        <name>2</name>
        <sequence type="described" ref="VSP_009160 VSP_009161"/>
    </isoform>
    <isoform>
        <id>Q14677-3</id>
        <name>3</name>
        <sequence type="described" ref="VSP_043302"/>
    </isoform>
</comment>
<comment type="tissue specificity">
    <text evidence="6 7">Ubiquitously expressed at low to intermediate levels.</text>
</comment>
<comment type="polymorphism">
    <text evidence="9">Genetic variations in CLINT1 may contribute to susceptibility to schizophrenia (SCZD1) and psychotic disorders in some populations.</text>
</comment>
<comment type="similarity">
    <text evidence="13">Belongs to the epsin family.</text>
</comment>
<comment type="sequence caution" evidence="13">
    <conflict type="erroneous initiation">
        <sequence resource="EMBL-CDS" id="BAA11488"/>
    </conflict>
</comment>
<keyword id="KW-0002">3D-structure</keyword>
<keyword id="KW-0025">Alternative splicing</keyword>
<keyword id="KW-0963">Cytoplasm</keyword>
<keyword id="KW-0968">Cytoplasmic vesicle</keyword>
<keyword id="KW-0903">Direct protein sequencing</keyword>
<keyword id="KW-0254">Endocytosis</keyword>
<keyword id="KW-0446">Lipid-binding</keyword>
<keyword id="KW-0472">Membrane</keyword>
<keyword id="KW-0597">Phosphoprotein</keyword>
<keyword id="KW-1267">Proteomics identification</keyword>
<keyword id="KW-1185">Reference proteome</keyword>
<organism>
    <name type="scientific">Homo sapiens</name>
    <name type="common">Human</name>
    <dbReference type="NCBI Taxonomy" id="9606"/>
    <lineage>
        <taxon>Eukaryota</taxon>
        <taxon>Metazoa</taxon>
        <taxon>Chordata</taxon>
        <taxon>Craniata</taxon>
        <taxon>Vertebrata</taxon>
        <taxon>Euteleostomi</taxon>
        <taxon>Mammalia</taxon>
        <taxon>Eutheria</taxon>
        <taxon>Euarchontoglires</taxon>
        <taxon>Primates</taxon>
        <taxon>Haplorrhini</taxon>
        <taxon>Catarrhini</taxon>
        <taxon>Hominidae</taxon>
        <taxon>Homo</taxon>
    </lineage>
</organism>
<name>EPN4_HUMAN</name>
<gene>
    <name type="primary">CLINT1</name>
    <name type="synonym">ENTH</name>
    <name type="synonym">EPN4</name>
    <name type="synonym">EPNR</name>
    <name type="synonym">KIAA0171</name>
</gene>
<dbReference type="EMBL" id="BK000414">
    <property type="protein sequence ID" value="DAA00062.1"/>
    <property type="molecule type" value="Genomic_DNA"/>
</dbReference>
<dbReference type="EMBL" id="AF434813">
    <property type="protein sequence ID" value="AAL30768.1"/>
    <property type="molecule type" value="mRNA"/>
</dbReference>
<dbReference type="EMBL" id="D79993">
    <property type="protein sequence ID" value="BAA11488.2"/>
    <property type="status" value="ALT_INIT"/>
    <property type="molecule type" value="mRNA"/>
</dbReference>
<dbReference type="EMBL" id="AK092765">
    <property type="protein sequence ID" value="BAC03971.1"/>
    <property type="molecule type" value="mRNA"/>
</dbReference>
<dbReference type="EMBL" id="AK300257">
    <property type="protein sequence ID" value="BAH13244.1"/>
    <property type="molecule type" value="mRNA"/>
</dbReference>
<dbReference type="EMBL" id="AC011394">
    <property type="status" value="NOT_ANNOTATED_CDS"/>
    <property type="molecule type" value="Genomic_DNA"/>
</dbReference>
<dbReference type="EMBL" id="AC026407">
    <property type="status" value="NOT_ANNOTATED_CDS"/>
    <property type="molecule type" value="Genomic_DNA"/>
</dbReference>
<dbReference type="EMBL" id="CH471062">
    <property type="protein sequence ID" value="EAW61585.1"/>
    <property type="molecule type" value="Genomic_DNA"/>
</dbReference>
<dbReference type="EMBL" id="CH471062">
    <property type="protein sequence ID" value="EAW61588.1"/>
    <property type="molecule type" value="Genomic_DNA"/>
</dbReference>
<dbReference type="EMBL" id="BC004467">
    <property type="protein sequence ID" value="AAH04467.1"/>
    <property type="molecule type" value="mRNA"/>
</dbReference>
<dbReference type="EMBL" id="BC013091">
    <property type="protein sequence ID" value="AAH13091.1"/>
    <property type="molecule type" value="mRNA"/>
</dbReference>
<dbReference type="CCDS" id="CCDS47330.1">
    <molecule id="Q14677-1"/>
</dbReference>
<dbReference type="CCDS" id="CCDS56388.1">
    <molecule id="Q14677-2"/>
</dbReference>
<dbReference type="CCDS" id="CCDS56389.1">
    <molecule id="Q14677-3"/>
</dbReference>
<dbReference type="RefSeq" id="NP_001182484.1">
    <molecule id="Q14677-3"/>
    <property type="nucleotide sequence ID" value="NM_001195555.2"/>
</dbReference>
<dbReference type="RefSeq" id="NP_001182485.1">
    <molecule id="Q14677-2"/>
    <property type="nucleotide sequence ID" value="NM_001195556.2"/>
</dbReference>
<dbReference type="RefSeq" id="NP_055481.1">
    <molecule id="Q14677-1"/>
    <property type="nucleotide sequence ID" value="NM_014666.4"/>
</dbReference>
<dbReference type="PDB" id="1XGW">
    <property type="method" value="X-ray"/>
    <property type="resolution" value="1.90 A"/>
    <property type="chains" value="A=1-165"/>
</dbReference>
<dbReference type="PDB" id="2QY7">
    <property type="method" value="X-ray"/>
    <property type="resolution" value="2.00 A"/>
    <property type="chains" value="A/B/C=20-166"/>
</dbReference>
<dbReference type="PDB" id="2V8S">
    <property type="method" value="X-ray"/>
    <property type="resolution" value="2.22 A"/>
    <property type="chains" value="E=20-166"/>
</dbReference>
<dbReference type="PDBsum" id="1XGW"/>
<dbReference type="PDBsum" id="2QY7"/>
<dbReference type="PDBsum" id="2V8S"/>
<dbReference type="SMR" id="Q14677"/>
<dbReference type="BioGRID" id="115038">
    <property type="interactions" value="236"/>
</dbReference>
<dbReference type="DIP" id="DIP-45604N"/>
<dbReference type="ELM" id="Q14677"/>
<dbReference type="FunCoup" id="Q14677">
    <property type="interactions" value="2643"/>
</dbReference>
<dbReference type="IntAct" id="Q14677">
    <property type="interactions" value="156"/>
</dbReference>
<dbReference type="MINT" id="Q14677"/>
<dbReference type="STRING" id="9606.ENSP00000429824"/>
<dbReference type="TCDB" id="8.A.137.1.1">
    <property type="family name" value="the clathrin (clathrin) family"/>
</dbReference>
<dbReference type="GlyCosmos" id="Q14677">
    <property type="glycosylation" value="6 sites, 1 glycan"/>
</dbReference>
<dbReference type="GlyGen" id="Q14677">
    <property type="glycosylation" value="11 sites, 1 N-linked glycan (1 site), 1 O-linked glycan (10 sites)"/>
</dbReference>
<dbReference type="iPTMnet" id="Q14677"/>
<dbReference type="MetOSite" id="Q14677"/>
<dbReference type="PhosphoSitePlus" id="Q14677"/>
<dbReference type="BioMuta" id="CLINT1"/>
<dbReference type="DMDM" id="41016993"/>
<dbReference type="jPOST" id="Q14677"/>
<dbReference type="MassIVE" id="Q14677"/>
<dbReference type="PaxDb" id="9606-ENSP00000429824"/>
<dbReference type="PeptideAtlas" id="Q14677"/>
<dbReference type="ProteomicsDB" id="60109">
    <molecule id="Q14677-1"/>
</dbReference>
<dbReference type="ProteomicsDB" id="60110">
    <molecule id="Q14677-2"/>
</dbReference>
<dbReference type="ProteomicsDB" id="60111">
    <molecule id="Q14677-3"/>
</dbReference>
<dbReference type="Pumba" id="Q14677"/>
<dbReference type="Antibodypedia" id="28472">
    <property type="antibodies" value="278 antibodies from 28 providers"/>
</dbReference>
<dbReference type="DNASU" id="9685"/>
<dbReference type="Ensembl" id="ENST00000411809.7">
    <molecule id="Q14677-1"/>
    <property type="protein sequence ID" value="ENSP00000388340.2"/>
    <property type="gene ID" value="ENSG00000113282.14"/>
</dbReference>
<dbReference type="Ensembl" id="ENST00000523094.5">
    <molecule id="Q14677-2"/>
    <property type="protein sequence ID" value="ENSP00000429345.1"/>
    <property type="gene ID" value="ENSG00000113282.14"/>
</dbReference>
<dbReference type="Ensembl" id="ENST00000523908.5">
    <molecule id="Q14677-3"/>
    <property type="protein sequence ID" value="ENSP00000429824.1"/>
    <property type="gene ID" value="ENSG00000113282.14"/>
</dbReference>
<dbReference type="Ensembl" id="ENST00000530742.5">
    <molecule id="Q14677-2"/>
    <property type="protein sequence ID" value="ENSP00000433419.1"/>
    <property type="gene ID" value="ENSG00000113282.14"/>
</dbReference>
<dbReference type="GeneID" id="9685"/>
<dbReference type="KEGG" id="hsa:9685"/>
<dbReference type="MANE-Select" id="ENST00000411809.7">
    <property type="protein sequence ID" value="ENSP00000388340.2"/>
    <property type="RefSeq nucleotide sequence ID" value="NM_014666.4"/>
    <property type="RefSeq protein sequence ID" value="NP_055481.1"/>
</dbReference>
<dbReference type="UCSC" id="uc003lxi.3">
    <molecule id="Q14677-1"/>
    <property type="organism name" value="human"/>
</dbReference>
<dbReference type="AGR" id="HGNC:23186"/>
<dbReference type="CTD" id="9685"/>
<dbReference type="DisGeNET" id="9685"/>
<dbReference type="GeneCards" id="CLINT1"/>
<dbReference type="HGNC" id="HGNC:23186">
    <property type="gene designation" value="CLINT1"/>
</dbReference>
<dbReference type="HPA" id="ENSG00000113282">
    <property type="expression patterns" value="Low tissue specificity"/>
</dbReference>
<dbReference type="MIM" id="607265">
    <property type="type" value="gene"/>
</dbReference>
<dbReference type="neXtProt" id="NX_Q14677"/>
<dbReference type="OpenTargets" id="ENSG00000113282"/>
<dbReference type="PharmGKB" id="PA145149115"/>
<dbReference type="VEuPathDB" id="HostDB:ENSG00000113282"/>
<dbReference type="eggNOG" id="KOG2057">
    <property type="taxonomic scope" value="Eukaryota"/>
</dbReference>
<dbReference type="GeneTree" id="ENSGT00940000155650"/>
<dbReference type="HOGENOM" id="CLU_032178_1_0_1"/>
<dbReference type="InParanoid" id="Q14677"/>
<dbReference type="OMA" id="QTSMAQP"/>
<dbReference type="OrthoDB" id="4033880at2759"/>
<dbReference type="PAN-GO" id="Q14677">
    <property type="GO annotations" value="6 GO annotations based on evolutionary models"/>
</dbReference>
<dbReference type="PhylomeDB" id="Q14677"/>
<dbReference type="TreeFam" id="TF313361"/>
<dbReference type="PathwayCommons" id="Q14677"/>
<dbReference type="Reactome" id="R-HSA-432722">
    <property type="pathway name" value="Golgi Associated Vesicle Biogenesis"/>
</dbReference>
<dbReference type="SignaLink" id="Q14677"/>
<dbReference type="BioGRID-ORCS" id="9685">
    <property type="hits" value="21 hits in 1159 CRISPR screens"/>
</dbReference>
<dbReference type="CD-CODE" id="DEE660B4">
    <property type="entry name" value="Stress granule"/>
</dbReference>
<dbReference type="ChiTaRS" id="CLINT1">
    <property type="organism name" value="human"/>
</dbReference>
<dbReference type="EvolutionaryTrace" id="Q14677"/>
<dbReference type="GeneWiki" id="CLINT1"/>
<dbReference type="GenomeRNAi" id="9685"/>
<dbReference type="Pharos" id="Q14677">
    <property type="development level" value="Tbio"/>
</dbReference>
<dbReference type="PRO" id="PR:Q14677"/>
<dbReference type="Proteomes" id="UP000005640">
    <property type="component" value="Chromosome 5"/>
</dbReference>
<dbReference type="RNAct" id="Q14677">
    <property type="molecule type" value="protein"/>
</dbReference>
<dbReference type="Bgee" id="ENSG00000113282">
    <property type="expression patterns" value="Expressed in palpebral conjunctiva and 212 other cell types or tissues"/>
</dbReference>
<dbReference type="ExpressionAtlas" id="Q14677">
    <property type="expression patterns" value="baseline and differential"/>
</dbReference>
<dbReference type="GO" id="GO:0030125">
    <property type="term" value="C:clathrin vesicle coat"/>
    <property type="evidence" value="ECO:0000318"/>
    <property type="project" value="GO_Central"/>
</dbReference>
<dbReference type="GO" id="GO:0005829">
    <property type="term" value="C:cytosol"/>
    <property type="evidence" value="ECO:0000304"/>
    <property type="project" value="Reactome"/>
</dbReference>
<dbReference type="GO" id="GO:0005768">
    <property type="term" value="C:endosome"/>
    <property type="evidence" value="ECO:0000318"/>
    <property type="project" value="GO_Central"/>
</dbReference>
<dbReference type="GO" id="GO:0005794">
    <property type="term" value="C:Golgi apparatus"/>
    <property type="evidence" value="ECO:0000314"/>
    <property type="project" value="UniProtKB"/>
</dbReference>
<dbReference type="GO" id="GO:0043231">
    <property type="term" value="C:intracellular membrane-bounded organelle"/>
    <property type="evidence" value="ECO:0000314"/>
    <property type="project" value="HPA"/>
</dbReference>
<dbReference type="GO" id="GO:0016020">
    <property type="term" value="C:membrane"/>
    <property type="evidence" value="ECO:0007005"/>
    <property type="project" value="UniProtKB"/>
</dbReference>
<dbReference type="GO" id="GO:0005654">
    <property type="term" value="C:nucleoplasm"/>
    <property type="evidence" value="ECO:0000314"/>
    <property type="project" value="HPA"/>
</dbReference>
<dbReference type="GO" id="GO:0048471">
    <property type="term" value="C:perinuclear region of cytoplasm"/>
    <property type="evidence" value="ECO:0007669"/>
    <property type="project" value="UniProtKB-SubCell"/>
</dbReference>
<dbReference type="GO" id="GO:0005886">
    <property type="term" value="C:plasma membrane"/>
    <property type="evidence" value="ECO:0000318"/>
    <property type="project" value="GO_Central"/>
</dbReference>
<dbReference type="GO" id="GO:0045296">
    <property type="term" value="F:cadherin binding"/>
    <property type="evidence" value="ECO:0007005"/>
    <property type="project" value="BHF-UCL"/>
</dbReference>
<dbReference type="GO" id="GO:0030276">
    <property type="term" value="F:clathrin binding"/>
    <property type="evidence" value="ECO:0000353"/>
    <property type="project" value="BHF-UCL"/>
</dbReference>
<dbReference type="GO" id="GO:0005543">
    <property type="term" value="F:phospholipid binding"/>
    <property type="evidence" value="ECO:0000318"/>
    <property type="project" value="GO_Central"/>
</dbReference>
<dbReference type="GO" id="GO:0048268">
    <property type="term" value="P:clathrin coat assembly"/>
    <property type="evidence" value="ECO:0007669"/>
    <property type="project" value="Ensembl"/>
</dbReference>
<dbReference type="GO" id="GO:0006897">
    <property type="term" value="P:endocytosis"/>
    <property type="evidence" value="ECO:0000318"/>
    <property type="project" value="GO_Central"/>
</dbReference>
<dbReference type="CDD" id="cd16989">
    <property type="entry name" value="ENTH_EpsinR"/>
    <property type="match status" value="1"/>
</dbReference>
<dbReference type="FunFam" id="1.25.40.90:FF:000006">
    <property type="entry name" value="Clathrin interactor 1"/>
    <property type="match status" value="1"/>
</dbReference>
<dbReference type="Gene3D" id="1.25.40.90">
    <property type="match status" value="1"/>
</dbReference>
<dbReference type="InterPro" id="IPR013809">
    <property type="entry name" value="ENTH"/>
</dbReference>
<dbReference type="InterPro" id="IPR008942">
    <property type="entry name" value="ENTH_VHS"/>
</dbReference>
<dbReference type="PANTHER" id="PTHR12276:SF45">
    <property type="entry name" value="CLATHRIN INTERACTOR 1"/>
    <property type="match status" value="1"/>
</dbReference>
<dbReference type="PANTHER" id="PTHR12276">
    <property type="entry name" value="EPSIN/ENT-RELATED"/>
    <property type="match status" value="1"/>
</dbReference>
<dbReference type="Pfam" id="PF01417">
    <property type="entry name" value="ENTH"/>
    <property type="match status" value="1"/>
</dbReference>
<dbReference type="SMART" id="SM00273">
    <property type="entry name" value="ENTH"/>
    <property type="match status" value="1"/>
</dbReference>
<dbReference type="SUPFAM" id="SSF48464">
    <property type="entry name" value="ENTH/VHS domain"/>
    <property type="match status" value="1"/>
</dbReference>
<dbReference type="PROSITE" id="PS50942">
    <property type="entry name" value="ENTH"/>
    <property type="match status" value="1"/>
</dbReference>
<sequence>MLNMWKVRELVDKATNVVMNYSEIESKVREATNDDPWGPSGQLMGEIAKATFMYEQFPELMNMLWSRMLKDNKKNWRRVYKSLLLLAYLIRNGSERVVTSAREHIYDLRSLENYHFVDEHGKDQGINIRQKVKELVEFAQDDDRLREERKKAKKNKDKYVGVSSDSVGGFRYSERYDPEPKSKWDEEWDKNKSAFPFSDKLGELSDKIGSTIDDTISKFRRKDREDSPERCSDSDEEKKARRGRSPKGEFKDEEETVTTKHIHITQATETTTTRHKRTANPSKTIDLGAAAHYTGDKASPDQNASTHTPQSSVKTSVPSSKSSGDLVDLFDGTSQSTGGSADLFGGFADFGSAAASGSFPSQVTATSGNGDFGDWSAFNQAPSGPVASSGEFFGSASQPAVELVSGSQSALGPPPAASNSSDLFDLMGSSQATMTSSQSMNFSMMSTNTVGLGLPMSRSQNTDMVQKSVSKTLPSTWSDPSVNISLDNLLPGMQPSKPQQPSLNTMIQQQNMQQPMNVMTQSFGAVNLSSPSNMLPVRPQTNALIGGPMPMSMPNVMTGTMGMAPLGNTPMMNQSMMGMNMNIGMSAAGMGLTGTMGMGMPNIAMTSGTVQPKQDAFANFANFSK</sequence>
<accession>Q14677</accession>
<accession>B7Z6F8</accession>
<accession>D3DQJ6</accession>
<accession>Q8NAF1</accession>
<accession>Q96E05</accession>